<gene>
    <name type="primary">DNASE1L1</name>
</gene>
<comment type="subcellular location">
    <subcellularLocation>
        <location evidence="1">Endoplasmic reticulum</location>
    </subcellularLocation>
</comment>
<comment type="similarity">
    <text evidence="3">Belongs to the DNase I family.</text>
</comment>
<proteinExistence type="evidence at transcript level"/>
<organism>
    <name type="scientific">Cricetulus griseus</name>
    <name type="common">Chinese hamster</name>
    <name type="synonym">Cricetulus barabensis griseus</name>
    <dbReference type="NCBI Taxonomy" id="10029"/>
    <lineage>
        <taxon>Eukaryota</taxon>
        <taxon>Metazoa</taxon>
        <taxon>Chordata</taxon>
        <taxon>Craniata</taxon>
        <taxon>Vertebrata</taxon>
        <taxon>Euteleostomi</taxon>
        <taxon>Mammalia</taxon>
        <taxon>Eutheria</taxon>
        <taxon>Euarchontoglires</taxon>
        <taxon>Glires</taxon>
        <taxon>Rodentia</taxon>
        <taxon>Myomorpha</taxon>
        <taxon>Muroidea</taxon>
        <taxon>Cricetidae</taxon>
        <taxon>Cricetinae</taxon>
        <taxon>Cricetulus</taxon>
    </lineage>
</organism>
<keyword id="KW-1015">Disulfide bond</keyword>
<keyword id="KW-0255">Endonuclease</keyword>
<keyword id="KW-0256">Endoplasmic reticulum</keyword>
<keyword id="KW-0325">Glycoprotein</keyword>
<keyword id="KW-0378">Hydrolase</keyword>
<keyword id="KW-0540">Nuclease</keyword>
<keyword id="KW-0732">Signal</keyword>
<accession>Q2QDE6</accession>
<dbReference type="EC" id="3.1.21.-"/>
<dbReference type="EMBL" id="DQ116786">
    <property type="protein sequence ID" value="AAZ94279.1"/>
    <property type="molecule type" value="mRNA"/>
</dbReference>
<dbReference type="RefSeq" id="NP_001231047.1">
    <property type="nucleotide sequence ID" value="NM_001244118.1"/>
</dbReference>
<dbReference type="SMR" id="Q2QDE6"/>
<dbReference type="GlyCosmos" id="Q2QDE6">
    <property type="glycosylation" value="3 sites, No reported glycans"/>
</dbReference>
<dbReference type="PaxDb" id="10029-NP_001231047.1"/>
<dbReference type="Ensembl" id="ENSCGRT00001025114.1">
    <property type="protein sequence ID" value="ENSCGRP00001020870.1"/>
    <property type="gene ID" value="ENSCGRG00001019882.1"/>
</dbReference>
<dbReference type="GeneID" id="100689095"/>
<dbReference type="KEGG" id="cge:100689095"/>
<dbReference type="CTD" id="1774"/>
<dbReference type="eggNOG" id="ENOG502QQFT">
    <property type="taxonomic scope" value="Eukaryota"/>
</dbReference>
<dbReference type="GeneTree" id="ENSGT00950000182846"/>
<dbReference type="OMA" id="LNFYQYE"/>
<dbReference type="OrthoDB" id="10061407at2759"/>
<dbReference type="Proteomes" id="UP000694386">
    <property type="component" value="Unplaced"/>
</dbReference>
<dbReference type="Proteomes" id="UP001108280">
    <property type="component" value="Chromosome X"/>
</dbReference>
<dbReference type="GO" id="GO:0005783">
    <property type="term" value="C:endoplasmic reticulum"/>
    <property type="evidence" value="ECO:0007669"/>
    <property type="project" value="UniProtKB-SubCell"/>
</dbReference>
<dbReference type="GO" id="GO:0005634">
    <property type="term" value="C:nucleus"/>
    <property type="evidence" value="ECO:0007669"/>
    <property type="project" value="TreeGrafter"/>
</dbReference>
<dbReference type="GO" id="GO:0004530">
    <property type="term" value="F:deoxyribonuclease I activity"/>
    <property type="evidence" value="ECO:0007669"/>
    <property type="project" value="TreeGrafter"/>
</dbReference>
<dbReference type="GO" id="GO:0003677">
    <property type="term" value="F:DNA binding"/>
    <property type="evidence" value="ECO:0007669"/>
    <property type="project" value="TreeGrafter"/>
</dbReference>
<dbReference type="GO" id="GO:0006308">
    <property type="term" value="P:DNA catabolic process"/>
    <property type="evidence" value="ECO:0007669"/>
    <property type="project" value="InterPro"/>
</dbReference>
<dbReference type="CDD" id="cd10282">
    <property type="entry name" value="DNase1"/>
    <property type="match status" value="1"/>
</dbReference>
<dbReference type="FunFam" id="3.60.10.10:FF:000007">
    <property type="entry name" value="Deoxyribonuclease"/>
    <property type="match status" value="1"/>
</dbReference>
<dbReference type="Gene3D" id="3.60.10.10">
    <property type="entry name" value="Endonuclease/exonuclease/phosphatase"/>
    <property type="match status" value="1"/>
</dbReference>
<dbReference type="InterPro" id="IPR018057">
    <property type="entry name" value="Deoxyribonuclease-1_AS"/>
</dbReference>
<dbReference type="InterPro" id="IPR016202">
    <property type="entry name" value="DNase_I"/>
</dbReference>
<dbReference type="InterPro" id="IPR033125">
    <property type="entry name" value="DNASE_I_2"/>
</dbReference>
<dbReference type="InterPro" id="IPR036691">
    <property type="entry name" value="Endo/exonu/phosph_ase_sf"/>
</dbReference>
<dbReference type="InterPro" id="IPR005135">
    <property type="entry name" value="Endo/exonuclease/phosphatase"/>
</dbReference>
<dbReference type="PANTHER" id="PTHR11371">
    <property type="entry name" value="DEOXYRIBONUCLEASE"/>
    <property type="match status" value="1"/>
</dbReference>
<dbReference type="PANTHER" id="PTHR11371:SF28">
    <property type="entry name" value="DEOXYRIBONUCLEASE-1-LIKE 1"/>
    <property type="match status" value="1"/>
</dbReference>
<dbReference type="Pfam" id="PF03372">
    <property type="entry name" value="Exo_endo_phos"/>
    <property type="match status" value="1"/>
</dbReference>
<dbReference type="PIRSF" id="PIRSF000988">
    <property type="entry name" value="DNase_I_euk"/>
    <property type="match status" value="1"/>
</dbReference>
<dbReference type="PRINTS" id="PR00130">
    <property type="entry name" value="DNASEI"/>
</dbReference>
<dbReference type="SMART" id="SM00476">
    <property type="entry name" value="DNaseIc"/>
    <property type="match status" value="1"/>
</dbReference>
<dbReference type="SUPFAM" id="SSF56219">
    <property type="entry name" value="DNase I-like"/>
    <property type="match status" value="1"/>
</dbReference>
<dbReference type="PROSITE" id="PS00919">
    <property type="entry name" value="DNASE_I_1"/>
    <property type="match status" value="1"/>
</dbReference>
<dbReference type="PROSITE" id="PS00918">
    <property type="entry name" value="DNASE_I_2"/>
    <property type="match status" value="1"/>
</dbReference>
<protein>
    <recommendedName>
        <fullName>Deoxyribonuclease-1-like 1</fullName>
        <ecNumber>3.1.21.-</ecNumber>
    </recommendedName>
    <alternativeName>
        <fullName>DNase X</fullName>
    </alternativeName>
    <alternativeName>
        <fullName>Deoxyribonuclease I-like 1</fullName>
        <shortName>DNase I-like 1</shortName>
    </alternativeName>
</protein>
<sequence>MPYMAMHGLTVALLLIFLAGGTEAFRICAFNAQRLTLSKLAKEPVMDTLVQILARCDIMVLQEVVDSSQKTVSLLLRELNRFDSSRTYSFLNSSLLGRSTYKEKYVYIYRSDKTQILNSYQYNDTNDLFAREPFVAQFALPSKILPSVVLVPLHTTPKDVEKELNALYDVFLDVSQRWQNEDVILLGDFNADCASLTKKRLNSLLLRTEAGFHWVISDGEDTTVRASTNCTYDRIVMHGQGCQTLLRAAAPFNFPRSFQLTEEEALSISDHYPVEVELSQATHNIQLFSLAILLLLSLLPSQLS</sequence>
<reference key="1">
    <citation type="journal article" date="2005" name="Biochem. J.">
        <title>Physical and biochemical properties of mammalian DNase X proteins: non-AUG translation initiation of porcine and bovine mRNAs for DNase X.</title>
        <authorList>
            <person name="Shiokawa D."/>
            <person name="Shika Y."/>
            <person name="Saito K."/>
            <person name="Yamazaki K."/>
            <person name="Tanuma S."/>
        </authorList>
    </citation>
    <scope>NUCLEOTIDE SEQUENCE [MRNA]</scope>
</reference>
<name>DNSL1_CRIGR</name>
<feature type="signal peptide" evidence="2">
    <location>
        <begin position="1"/>
        <end position="24"/>
    </location>
</feature>
<feature type="chain" id="PRO_0000231032" description="Deoxyribonuclease-1-like 1">
    <location>
        <begin position="25"/>
        <end position="304"/>
    </location>
</feature>
<feature type="active site" evidence="1">
    <location>
        <position position="103"/>
    </location>
</feature>
<feature type="active site" evidence="1">
    <location>
        <position position="154"/>
    </location>
</feature>
<feature type="glycosylation site" description="N-linked (GlcNAc...) asparagine" evidence="2">
    <location>
        <position position="92"/>
    </location>
</feature>
<feature type="glycosylation site" description="N-linked (GlcNAc...) asparagine" evidence="2">
    <location>
        <position position="123"/>
    </location>
</feature>
<feature type="glycosylation site" description="N-linked (GlcNAc...) asparagine" evidence="2">
    <location>
        <position position="229"/>
    </location>
</feature>
<feature type="disulfide bond" description="Essential for enzymatic activity" evidence="1">
    <location>
        <begin position="193"/>
        <end position="230"/>
    </location>
</feature>
<evidence type="ECO:0000250" key="1"/>
<evidence type="ECO:0000255" key="2"/>
<evidence type="ECO:0000305" key="3"/>